<gene>
    <name evidence="1" type="primary">glnS</name>
    <name type="ordered locus">Ent638_1195</name>
</gene>
<reference key="1">
    <citation type="journal article" date="2010" name="PLoS Genet.">
        <title>Genome sequence of the plant growth promoting endophytic bacterium Enterobacter sp. 638.</title>
        <authorList>
            <person name="Taghavi S."/>
            <person name="van der Lelie D."/>
            <person name="Hoffman A."/>
            <person name="Zhang Y.B."/>
            <person name="Walla M.D."/>
            <person name="Vangronsveld J."/>
            <person name="Newman L."/>
            <person name="Monchy S."/>
        </authorList>
    </citation>
    <scope>NUCLEOTIDE SEQUENCE [LARGE SCALE GENOMIC DNA]</scope>
    <source>
        <strain>638</strain>
    </source>
</reference>
<organism>
    <name type="scientific">Enterobacter sp. (strain 638)</name>
    <dbReference type="NCBI Taxonomy" id="399742"/>
    <lineage>
        <taxon>Bacteria</taxon>
        <taxon>Pseudomonadati</taxon>
        <taxon>Pseudomonadota</taxon>
        <taxon>Gammaproteobacteria</taxon>
        <taxon>Enterobacterales</taxon>
        <taxon>Enterobacteriaceae</taxon>
        <taxon>Enterobacter</taxon>
    </lineage>
</organism>
<dbReference type="EC" id="6.1.1.18" evidence="1"/>
<dbReference type="EMBL" id="CP000653">
    <property type="protein sequence ID" value="ABP59876.1"/>
    <property type="molecule type" value="Genomic_DNA"/>
</dbReference>
<dbReference type="RefSeq" id="WP_012016595.1">
    <property type="nucleotide sequence ID" value="NC_009436.1"/>
</dbReference>
<dbReference type="SMR" id="A4W846"/>
<dbReference type="STRING" id="399742.Ent638_1195"/>
<dbReference type="KEGG" id="ent:Ent638_1195"/>
<dbReference type="eggNOG" id="COG0008">
    <property type="taxonomic scope" value="Bacteria"/>
</dbReference>
<dbReference type="HOGENOM" id="CLU_001882_2_3_6"/>
<dbReference type="OrthoDB" id="9801560at2"/>
<dbReference type="Proteomes" id="UP000000230">
    <property type="component" value="Chromosome"/>
</dbReference>
<dbReference type="GO" id="GO:0005829">
    <property type="term" value="C:cytosol"/>
    <property type="evidence" value="ECO:0007669"/>
    <property type="project" value="TreeGrafter"/>
</dbReference>
<dbReference type="GO" id="GO:0005524">
    <property type="term" value="F:ATP binding"/>
    <property type="evidence" value="ECO:0007669"/>
    <property type="project" value="UniProtKB-UniRule"/>
</dbReference>
<dbReference type="GO" id="GO:0004819">
    <property type="term" value="F:glutamine-tRNA ligase activity"/>
    <property type="evidence" value="ECO:0007669"/>
    <property type="project" value="UniProtKB-UniRule"/>
</dbReference>
<dbReference type="GO" id="GO:0006425">
    <property type="term" value="P:glutaminyl-tRNA aminoacylation"/>
    <property type="evidence" value="ECO:0007669"/>
    <property type="project" value="InterPro"/>
</dbReference>
<dbReference type="GO" id="GO:0006424">
    <property type="term" value="P:glutamyl-tRNA aminoacylation"/>
    <property type="evidence" value="ECO:0007669"/>
    <property type="project" value="UniProtKB-UniRule"/>
</dbReference>
<dbReference type="CDD" id="cd00807">
    <property type="entry name" value="GlnRS_core"/>
    <property type="match status" value="1"/>
</dbReference>
<dbReference type="FunFam" id="1.10.1160.10:FF:000001">
    <property type="entry name" value="Glutamine--tRNA ligase"/>
    <property type="match status" value="1"/>
</dbReference>
<dbReference type="FunFam" id="2.40.240.10:FF:000001">
    <property type="entry name" value="Glutamine--tRNA ligase"/>
    <property type="match status" value="1"/>
</dbReference>
<dbReference type="FunFam" id="2.40.240.10:FF:000003">
    <property type="entry name" value="Glutamine--tRNA ligase"/>
    <property type="match status" value="1"/>
</dbReference>
<dbReference type="FunFam" id="3.90.800.10:FF:000001">
    <property type="entry name" value="Glutamine--tRNA ligase"/>
    <property type="match status" value="1"/>
</dbReference>
<dbReference type="FunFam" id="3.40.50.620:FF:000037">
    <property type="entry name" value="Glutamine--tRNA ligase cytoplasmic"/>
    <property type="match status" value="1"/>
</dbReference>
<dbReference type="Gene3D" id="1.10.1160.10">
    <property type="entry name" value="Glutamyl-trna Synthetase, Domain 2"/>
    <property type="match status" value="1"/>
</dbReference>
<dbReference type="Gene3D" id="3.90.800.10">
    <property type="entry name" value="Glutamyl-tRNA Synthetase, Domain 3"/>
    <property type="match status" value="1"/>
</dbReference>
<dbReference type="Gene3D" id="3.40.50.620">
    <property type="entry name" value="HUPs"/>
    <property type="match status" value="1"/>
</dbReference>
<dbReference type="Gene3D" id="2.40.240.10">
    <property type="entry name" value="Ribosomal Protein L25, Chain P"/>
    <property type="match status" value="2"/>
</dbReference>
<dbReference type="HAMAP" id="MF_00126">
    <property type="entry name" value="Gln_tRNA_synth"/>
    <property type="match status" value="1"/>
</dbReference>
<dbReference type="InterPro" id="IPR001412">
    <property type="entry name" value="aa-tRNA-synth_I_CS"/>
</dbReference>
<dbReference type="InterPro" id="IPR004514">
    <property type="entry name" value="Gln-tRNA-synth"/>
</dbReference>
<dbReference type="InterPro" id="IPR050132">
    <property type="entry name" value="Gln/Glu-tRNA_Ligase"/>
</dbReference>
<dbReference type="InterPro" id="IPR022861">
    <property type="entry name" value="Gln_tRNA_ligase_bac"/>
</dbReference>
<dbReference type="InterPro" id="IPR000924">
    <property type="entry name" value="Glu/Gln-tRNA-synth"/>
</dbReference>
<dbReference type="InterPro" id="IPR020058">
    <property type="entry name" value="Glu/Gln-tRNA-synth_Ib_cat-dom"/>
</dbReference>
<dbReference type="InterPro" id="IPR020059">
    <property type="entry name" value="Glu/Gln-tRNA-synth_Ib_codon-bd"/>
</dbReference>
<dbReference type="InterPro" id="IPR020061">
    <property type="entry name" value="Glu_tRNA_lig_a-bdl"/>
</dbReference>
<dbReference type="InterPro" id="IPR020056">
    <property type="entry name" value="Rbsml_bL25/Gln-tRNA_synth_N"/>
</dbReference>
<dbReference type="InterPro" id="IPR011035">
    <property type="entry name" value="Ribosomal_bL25/Gln-tRNA_synth"/>
</dbReference>
<dbReference type="InterPro" id="IPR014729">
    <property type="entry name" value="Rossmann-like_a/b/a_fold"/>
</dbReference>
<dbReference type="InterPro" id="IPR049437">
    <property type="entry name" value="tRNA-synt_1c_C2"/>
</dbReference>
<dbReference type="NCBIfam" id="TIGR00440">
    <property type="entry name" value="glnS"/>
    <property type="match status" value="1"/>
</dbReference>
<dbReference type="NCBIfam" id="NF011291">
    <property type="entry name" value="PRK14703.1"/>
    <property type="match status" value="1"/>
</dbReference>
<dbReference type="PANTHER" id="PTHR43097:SF5">
    <property type="entry name" value="GLUTAMATE--TRNA LIGASE"/>
    <property type="match status" value="1"/>
</dbReference>
<dbReference type="PANTHER" id="PTHR43097">
    <property type="entry name" value="GLUTAMINE-TRNA LIGASE"/>
    <property type="match status" value="1"/>
</dbReference>
<dbReference type="Pfam" id="PF00749">
    <property type="entry name" value="tRNA-synt_1c"/>
    <property type="match status" value="1"/>
</dbReference>
<dbReference type="Pfam" id="PF03950">
    <property type="entry name" value="tRNA-synt_1c_C"/>
    <property type="match status" value="1"/>
</dbReference>
<dbReference type="Pfam" id="PF20974">
    <property type="entry name" value="tRNA-synt_1c_C2"/>
    <property type="match status" value="1"/>
</dbReference>
<dbReference type="PRINTS" id="PR00987">
    <property type="entry name" value="TRNASYNTHGLU"/>
</dbReference>
<dbReference type="SUPFAM" id="SSF52374">
    <property type="entry name" value="Nucleotidylyl transferase"/>
    <property type="match status" value="1"/>
</dbReference>
<dbReference type="SUPFAM" id="SSF50715">
    <property type="entry name" value="Ribosomal protein L25-like"/>
    <property type="match status" value="1"/>
</dbReference>
<dbReference type="PROSITE" id="PS00178">
    <property type="entry name" value="AA_TRNA_LIGASE_I"/>
    <property type="match status" value="1"/>
</dbReference>
<evidence type="ECO:0000255" key="1">
    <source>
        <dbReference type="HAMAP-Rule" id="MF_00126"/>
    </source>
</evidence>
<name>SYQ_ENT38</name>
<feature type="chain" id="PRO_1000057820" description="Glutamine--tRNA ligase">
    <location>
        <begin position="1"/>
        <end position="555"/>
    </location>
</feature>
<feature type="region of interest" description="Interaction with tRNA" evidence="1">
    <location>
        <begin position="317"/>
        <end position="324"/>
    </location>
</feature>
<feature type="short sequence motif" description="'HIGH' region" evidence="1">
    <location>
        <begin position="34"/>
        <end position="44"/>
    </location>
</feature>
<feature type="short sequence motif" description="'KMSKS' region" evidence="1">
    <location>
        <begin position="268"/>
        <end position="272"/>
    </location>
</feature>
<feature type="binding site" evidence="1">
    <location>
        <begin position="35"/>
        <end position="37"/>
    </location>
    <ligand>
        <name>ATP</name>
        <dbReference type="ChEBI" id="CHEBI:30616"/>
    </ligand>
</feature>
<feature type="binding site" evidence="1">
    <location>
        <begin position="41"/>
        <end position="47"/>
    </location>
    <ligand>
        <name>ATP</name>
        <dbReference type="ChEBI" id="CHEBI:30616"/>
    </ligand>
</feature>
<feature type="binding site" evidence="1">
    <location>
        <position position="67"/>
    </location>
    <ligand>
        <name>L-glutamine</name>
        <dbReference type="ChEBI" id="CHEBI:58359"/>
    </ligand>
</feature>
<feature type="binding site" evidence="1">
    <location>
        <position position="212"/>
    </location>
    <ligand>
        <name>L-glutamine</name>
        <dbReference type="ChEBI" id="CHEBI:58359"/>
    </ligand>
</feature>
<feature type="binding site" evidence="1">
    <location>
        <position position="231"/>
    </location>
    <ligand>
        <name>ATP</name>
        <dbReference type="ChEBI" id="CHEBI:30616"/>
    </ligand>
</feature>
<feature type="binding site" evidence="1">
    <location>
        <begin position="261"/>
        <end position="262"/>
    </location>
    <ligand>
        <name>ATP</name>
        <dbReference type="ChEBI" id="CHEBI:30616"/>
    </ligand>
</feature>
<feature type="binding site" evidence="1">
    <location>
        <begin position="269"/>
        <end position="271"/>
    </location>
    <ligand>
        <name>ATP</name>
        <dbReference type="ChEBI" id="CHEBI:30616"/>
    </ligand>
</feature>
<sequence length="555" mass="63506">MSEAEARPSNFIRQIIDEDLASGKHTTVHTRFPPEPNGYLHIGHAKSICLNFGIAQDYQGQCNLRFDDTNPVKEDIEYVESIKNDVQWLGFNWSGDICYSSDYFDQLFAYAVELINKGLAYVDELSADEIREYRGSLTAPGKNSPYRDRSVEENLALFEKMRAGGFEEGKACLRAKIDMASPFIVMRDPVLYRIKFAEHHQTGNKWCIYPMYDFTHCISDALEGITHSLCTLEFQDNRRLYDWVLDNITIPVHPRQYEFSRLNLEYTVMSKRKLNLLVTDKHVEGWDDPRMPTISGLRRRGYSASSIREFIKRIGVTKQDNTIEMASLESCIREDLNENAPRAMAVIDPVKLVIENYPQGESELVTMPNHPSKPEMGSREVPFSAEIWIDRADFREEANKQYKRLVMGKEVRLRNAYVIKAERVEKDTEGNITTIFCSYDAETLSKDPADGRKVKGVIHWVSAAHALPVEIRLYDRLFSVPNPGAAEDFLATINPESLLIKQGYAEPSLKNAETGKAYQFEREGYFCLDSRYATATKLVFNRTVGLRDTWAKAGE</sequence>
<proteinExistence type="inferred from homology"/>
<protein>
    <recommendedName>
        <fullName evidence="1">Glutamine--tRNA ligase</fullName>
        <ecNumber evidence="1">6.1.1.18</ecNumber>
    </recommendedName>
    <alternativeName>
        <fullName evidence="1">Glutaminyl-tRNA synthetase</fullName>
        <shortName evidence="1">GlnRS</shortName>
    </alternativeName>
</protein>
<accession>A4W846</accession>
<comment type="catalytic activity">
    <reaction evidence="1">
        <text>tRNA(Gln) + L-glutamine + ATP = L-glutaminyl-tRNA(Gln) + AMP + diphosphate</text>
        <dbReference type="Rhea" id="RHEA:20121"/>
        <dbReference type="Rhea" id="RHEA-COMP:9662"/>
        <dbReference type="Rhea" id="RHEA-COMP:9681"/>
        <dbReference type="ChEBI" id="CHEBI:30616"/>
        <dbReference type="ChEBI" id="CHEBI:33019"/>
        <dbReference type="ChEBI" id="CHEBI:58359"/>
        <dbReference type="ChEBI" id="CHEBI:78442"/>
        <dbReference type="ChEBI" id="CHEBI:78521"/>
        <dbReference type="ChEBI" id="CHEBI:456215"/>
        <dbReference type="EC" id="6.1.1.18"/>
    </reaction>
</comment>
<comment type="subunit">
    <text evidence="1">Monomer.</text>
</comment>
<comment type="subcellular location">
    <subcellularLocation>
        <location evidence="1">Cytoplasm</location>
    </subcellularLocation>
</comment>
<comment type="similarity">
    <text evidence="1">Belongs to the class-I aminoacyl-tRNA synthetase family.</text>
</comment>
<keyword id="KW-0030">Aminoacyl-tRNA synthetase</keyword>
<keyword id="KW-0067">ATP-binding</keyword>
<keyword id="KW-0963">Cytoplasm</keyword>
<keyword id="KW-0436">Ligase</keyword>
<keyword id="KW-0547">Nucleotide-binding</keyword>
<keyword id="KW-0648">Protein biosynthesis</keyword>